<comment type="function">
    <text>Component of the ubiquinol-cytochrome c reductase complex (complex III or cytochrome b-c1 complex), which is a respiratory chain that generates an electrochemical potential coupled to ATP synthesis. c1 functions as an electron donor to cytochrome c.</text>
</comment>
<comment type="cofactor">
    <cofactor>
        <name>heme b</name>
        <dbReference type="ChEBI" id="CHEBI:60344"/>
    </cofactor>
    <text>Binds 2 heme b groups non-covalently. Heme 1 (or bL or b562) is low-potential and absorbs at about 562 nm, and heme 2 (or bH or b566) is high-potential and absorbs at about 566 nm.</text>
</comment>
<comment type="cofactor">
    <cofactor>
        <name>heme c</name>
        <dbReference type="ChEBI" id="CHEBI:61717"/>
    </cofactor>
    <text>Binds 1 heme c group covalently. Heme 3 is covalently bound to cytochrome c1.</text>
</comment>
<comment type="subunit">
    <text>The main subunits of complex b-c1 are: cytochrome b, cytochrome c1 and the Rieske protein.</text>
</comment>
<comment type="subcellular location">
    <subcellularLocation>
        <location evidence="7">Cell inner membrane</location>
        <topology evidence="7">Multi-pass membrane protein</topology>
    </subcellularLocation>
</comment>
<comment type="developmental stage">
    <text>Required for nitrogen fixation in root nodules on soybeans, but not for aerobic growth. It seems to be expressed under many growth conditions (aerobic, microaerobic and in nodule bacteroids).</text>
</comment>
<comment type="PTM">
    <text evidence="6">The protein is post-translationally processed into cytochrome b and c1. This occurs by processing between residues 434 and 435 without processing between cytochrome b and the N-terminal of the putative signal sequence domain.</text>
</comment>
<comment type="similarity">
    <text evidence="3 4">Belongs to the cytochrome b family.</text>
</comment>
<proteinExistence type="evidence at protein level"/>
<reference key="1">
    <citation type="journal article" date="1989" name="Cell">
        <title>An unusual gene cluster for the cytochrome bc1 complex in Bradyrhizobium japonicum and its requirement for effective root nodule symbiosis.</title>
        <authorList>
            <person name="Thoeny-Meyer L."/>
            <person name="Stax D."/>
            <person name="Hennecke H."/>
        </authorList>
    </citation>
    <scope>NUCLEOTIDE SEQUENCE [GENOMIC DNA]</scope>
    <scope>MEMBRANE LOCALIZATION</scope>
    <scope>PROTEOLYTIC PROCESSING</scope>
    <source>
        <strain>JCM 10833 / BCRC 13528 / IAM 13628 / NBRC 14792 / USDA 110</strain>
        <strain>USDA 110RIF15</strain>
    </source>
</reference>
<reference key="2">
    <citation type="journal article" date="2002" name="DNA Res.">
        <title>Complete genomic sequence of nitrogen-fixing symbiotic bacterium Bradyrhizobium japonicum USDA110.</title>
        <authorList>
            <person name="Kaneko T."/>
            <person name="Nakamura Y."/>
            <person name="Sato S."/>
            <person name="Minamisawa K."/>
            <person name="Uchiumi T."/>
            <person name="Sasamoto S."/>
            <person name="Watanabe A."/>
            <person name="Idesawa K."/>
            <person name="Iriguchi M."/>
            <person name="Kawashima K."/>
            <person name="Kohara M."/>
            <person name="Matsumoto M."/>
            <person name="Shimpo S."/>
            <person name="Tsuruoka H."/>
            <person name="Wada T."/>
            <person name="Yamada M."/>
            <person name="Tabata S."/>
        </authorList>
    </citation>
    <scope>NUCLEOTIDE SEQUENCE [LARGE SCALE GENOMIC DNA]</scope>
    <source>
        <strain>JCM 10833 / BCRC 13528 / IAM 13628 / NBRC 14792 / USDA 110</strain>
    </source>
</reference>
<reference key="3">
    <citation type="journal article" date="1991" name="Proc. Natl. Acad. Sci. U.S.A.">
        <title>From one gene to two proteins: the biogenesis of cytochromes b and c1 in Bradyrhizobium japonicum.</title>
        <authorList>
            <person name="Thoeny-Meyer L."/>
            <person name="James P."/>
            <person name="Hennecke H."/>
        </authorList>
    </citation>
    <scope>PROTEIN SEQUENCE OF 435-444</scope>
    <scope>MUTAGENESIS OF THE INTERNAL SIGNAL SEQUENCE AND OF THE CYTOCHROME C1 HEME-BINDING RESIDUES</scope>
    <source>
        <strain>USDA 110spc4</strain>
    </source>
</reference>
<keyword id="KW-0997">Cell inner membrane</keyword>
<keyword id="KW-1003">Cell membrane</keyword>
<keyword id="KW-0903">Direct protein sequencing</keyword>
<keyword id="KW-0249">Electron transport</keyword>
<keyword id="KW-0349">Heme</keyword>
<keyword id="KW-0408">Iron</keyword>
<keyword id="KW-0472">Membrane</keyword>
<keyword id="KW-0479">Metal-binding</keyword>
<keyword id="KW-1185">Reference proteome</keyword>
<keyword id="KW-0679">Respiratory chain</keyword>
<keyword id="KW-0812">Transmembrane</keyword>
<keyword id="KW-1133">Transmembrane helix</keyword>
<keyword id="KW-0813">Transport</keyword>
<organism>
    <name type="scientific">Bradyrhizobium diazoefficiens (strain JCM 10833 / BCRC 13528 / IAM 13628 / NBRC 14792 / USDA 110)</name>
    <dbReference type="NCBI Taxonomy" id="224911"/>
    <lineage>
        <taxon>Bacteria</taxon>
        <taxon>Pseudomonadati</taxon>
        <taxon>Pseudomonadota</taxon>
        <taxon>Alphaproteobacteria</taxon>
        <taxon>Hyphomicrobiales</taxon>
        <taxon>Nitrobacteraceae</taxon>
        <taxon>Bradyrhizobium</taxon>
    </lineage>
</organism>
<evidence type="ECO:0000255" key="1"/>
<evidence type="ECO:0000255" key="2">
    <source>
        <dbReference type="PROSITE-ProRule" id="PRU00433"/>
    </source>
</evidence>
<evidence type="ECO:0000255" key="3">
    <source>
        <dbReference type="PROSITE-ProRule" id="PRU00967"/>
    </source>
</evidence>
<evidence type="ECO:0000255" key="4">
    <source>
        <dbReference type="PROSITE-ProRule" id="PRU00968"/>
    </source>
</evidence>
<evidence type="ECO:0000269" key="5">
    <source>
    </source>
</evidence>
<evidence type="ECO:0000269" key="6">
    <source>
    </source>
</evidence>
<evidence type="ECO:0000305" key="7"/>
<feature type="chain" id="PRO_0000006468" description="Cytochrome b">
    <location>
        <begin position="1"/>
        <end position="434"/>
    </location>
</feature>
<feature type="chain" id="PRO_0000006469" description="Cytochrome c1">
    <location>
        <begin position="435"/>
        <end position="687"/>
    </location>
</feature>
<feature type="transmembrane region" description="Helical" evidence="1">
    <location>
        <begin position="46"/>
        <end position="66"/>
    </location>
</feature>
<feature type="transmembrane region" description="Helical" evidence="1">
    <location>
        <begin position="126"/>
        <end position="146"/>
    </location>
</feature>
<feature type="transmembrane region" description="Helical" evidence="1">
    <location>
        <begin position="160"/>
        <end position="180"/>
    </location>
</feature>
<feature type="transmembrane region" description="Helical" evidence="1">
    <location>
        <begin position="199"/>
        <end position="219"/>
    </location>
</feature>
<feature type="transmembrane region" description="Helical" evidence="1">
    <location>
        <begin position="247"/>
        <end position="267"/>
    </location>
</feature>
<feature type="transmembrane region" description="Helical" evidence="1">
    <location>
        <begin position="305"/>
        <end position="325"/>
    </location>
</feature>
<feature type="transmembrane region" description="Helical" evidence="1">
    <location>
        <begin position="337"/>
        <end position="357"/>
    </location>
</feature>
<feature type="transmembrane region" description="Helical" evidence="1">
    <location>
        <begin position="363"/>
        <end position="383"/>
    </location>
</feature>
<feature type="transmembrane region" description="Helical" evidence="1">
    <location>
        <begin position="410"/>
        <end position="430"/>
    </location>
</feature>
<feature type="transmembrane region" description="Helical; Note=Anchors to the membrane" evidence="3 4">
    <location>
        <begin position="666"/>
        <end position="678"/>
    </location>
</feature>
<feature type="domain" description="Cytochrome c" evidence="2">
    <location>
        <begin position="458"/>
        <end position="643"/>
    </location>
</feature>
<feature type="region of interest" description="Internal signal sequence">
    <location>
        <begin position="404"/>
        <end position="434"/>
    </location>
</feature>
<feature type="binding site" description="axial binding residue">
    <location>
        <position position="96"/>
    </location>
    <ligand>
        <name>heme b</name>
        <dbReference type="ChEBI" id="CHEBI:60344"/>
        <label>b562</label>
    </ligand>
    <ligandPart>
        <name>Fe</name>
        <dbReference type="ChEBI" id="CHEBI:18248"/>
    </ligandPart>
</feature>
<feature type="binding site" description="axial binding residue">
    <location>
        <position position="110"/>
    </location>
    <ligand>
        <name>heme b</name>
        <dbReference type="ChEBI" id="CHEBI:60344"/>
        <label>b566</label>
    </ligand>
    <ligandPart>
        <name>Fe</name>
        <dbReference type="ChEBI" id="CHEBI:18248"/>
    </ligandPart>
</feature>
<feature type="binding site" description="axial binding residue">
    <location>
        <position position="197"/>
    </location>
    <ligand>
        <name>heme b</name>
        <dbReference type="ChEBI" id="CHEBI:60344"/>
        <label>b562</label>
    </ligand>
    <ligandPart>
        <name>Fe</name>
        <dbReference type="ChEBI" id="CHEBI:18248"/>
    </ligandPart>
</feature>
<feature type="binding site" description="axial binding residue">
    <location>
        <position position="211"/>
    </location>
    <ligand>
        <name>heme b</name>
        <dbReference type="ChEBI" id="CHEBI:60344"/>
        <label>b566</label>
    </ligand>
    <ligandPart>
        <name>Fe</name>
        <dbReference type="ChEBI" id="CHEBI:18248"/>
    </ligandPart>
</feature>
<feature type="binding site" description="covalent">
    <location>
        <position position="471"/>
    </location>
    <ligand>
        <name>heme c</name>
        <dbReference type="ChEBI" id="CHEBI:61717"/>
    </ligand>
</feature>
<feature type="binding site" description="covalent">
    <location>
        <position position="474"/>
    </location>
    <ligand>
        <name>heme c</name>
        <dbReference type="ChEBI" id="CHEBI:61717"/>
    </ligand>
</feature>
<feature type="binding site" description="axial binding residue">
    <location>
        <position position="475"/>
    </location>
    <ligand>
        <name>heme c</name>
        <dbReference type="ChEBI" id="CHEBI:61717"/>
    </ligand>
    <ligandPart>
        <name>Fe</name>
        <dbReference type="ChEBI" id="CHEBI:18248"/>
    </ligandPart>
</feature>
<feature type="binding site" description="axial binding residue" evidence="2">
    <location>
        <position position="616"/>
    </location>
    <ligand>
        <name>heme c</name>
        <dbReference type="ChEBI" id="CHEBI:61717"/>
    </ligand>
    <ligandPart>
        <name>Fe</name>
        <dbReference type="ChEBI" id="CHEBI:18248"/>
    </ligandPart>
</feature>
<feature type="mutagenesis site" description="Individual cytochrome b and c1 are not detected, instead a larger protein which is probably the FbcH precursor protein is detected. Cytochrome c oxidase activity is not affected." evidence="5">
    <location>
        <begin position="432"/>
        <end position="434"/>
    </location>
</feature>
<feature type="mutagenesis site" description="Individual cytochrome b and c1 are not detected, instead a larger protein which is probably the FbcH precursor protein is detected. Cytochrome c oxidase activity is not affected." evidence="5">
    <original>A</original>
    <variation>D</variation>
    <location>
        <position position="432"/>
    </location>
</feature>
<feature type="mutagenesis site" description="No cytochrome c oxidase activity, no cytochrome b, c1 or precursor protein detected." evidence="5">
    <original>CASC</original>
    <variation>SASS</variation>
    <location>
        <begin position="471"/>
        <end position="474"/>
    </location>
</feature>
<protein>
    <recommendedName>
        <fullName>Cytochrome b/c1</fullName>
    </recommendedName>
    <component>
        <recommendedName>
            <fullName>Cytochrome b</fullName>
        </recommendedName>
    </component>
    <component>
        <recommendedName>
            <fullName>Cytochrome c1</fullName>
        </recommendedName>
    </component>
</protein>
<accession>P51131</accession>
<dbReference type="EMBL" id="J03176">
    <property type="protein sequence ID" value="AAA26200.1"/>
    <property type="molecule type" value="Genomic_DNA"/>
</dbReference>
<dbReference type="EMBL" id="BA000040">
    <property type="protein sequence ID" value="BAC47751.1"/>
    <property type="molecule type" value="Genomic_DNA"/>
</dbReference>
<dbReference type="PIR" id="B32382">
    <property type="entry name" value="B32382"/>
</dbReference>
<dbReference type="RefSeq" id="NP_769126.1">
    <property type="nucleotide sequence ID" value="NC_004463.1"/>
</dbReference>
<dbReference type="RefSeq" id="WP_011085273.1">
    <property type="nucleotide sequence ID" value="NC_004463.1"/>
</dbReference>
<dbReference type="SMR" id="P51131"/>
<dbReference type="STRING" id="224911.AAV28_09355"/>
<dbReference type="EnsemblBacteria" id="BAC47751">
    <property type="protein sequence ID" value="BAC47751"/>
    <property type="gene ID" value="BAC47751"/>
</dbReference>
<dbReference type="GeneID" id="46489525"/>
<dbReference type="KEGG" id="bja:blr2486"/>
<dbReference type="PATRIC" id="fig|224911.44.peg.2057"/>
<dbReference type="eggNOG" id="COG1290">
    <property type="taxonomic scope" value="Bacteria"/>
</dbReference>
<dbReference type="eggNOG" id="COG2857">
    <property type="taxonomic scope" value="Bacteria"/>
</dbReference>
<dbReference type="HOGENOM" id="CLU_021957_1_0_5"/>
<dbReference type="InParanoid" id="P51131"/>
<dbReference type="OrthoDB" id="9804503at2"/>
<dbReference type="PhylomeDB" id="P51131"/>
<dbReference type="Proteomes" id="UP000002526">
    <property type="component" value="Chromosome"/>
</dbReference>
<dbReference type="GO" id="GO:0016020">
    <property type="term" value="C:membrane"/>
    <property type="evidence" value="ECO:0000318"/>
    <property type="project" value="GO_Central"/>
</dbReference>
<dbReference type="GO" id="GO:0005886">
    <property type="term" value="C:plasma membrane"/>
    <property type="evidence" value="ECO:0007669"/>
    <property type="project" value="UniProtKB-SubCell"/>
</dbReference>
<dbReference type="GO" id="GO:0009055">
    <property type="term" value="F:electron transfer activity"/>
    <property type="evidence" value="ECO:0007669"/>
    <property type="project" value="InterPro"/>
</dbReference>
<dbReference type="GO" id="GO:0020037">
    <property type="term" value="F:heme binding"/>
    <property type="evidence" value="ECO:0007669"/>
    <property type="project" value="InterPro"/>
</dbReference>
<dbReference type="GO" id="GO:0046872">
    <property type="term" value="F:metal ion binding"/>
    <property type="evidence" value="ECO:0007669"/>
    <property type="project" value="UniProtKB-KW"/>
</dbReference>
<dbReference type="GO" id="GO:0016491">
    <property type="term" value="F:oxidoreductase activity"/>
    <property type="evidence" value="ECO:0007669"/>
    <property type="project" value="InterPro"/>
</dbReference>
<dbReference type="GO" id="GO:1902600">
    <property type="term" value="P:proton transmembrane transport"/>
    <property type="evidence" value="ECO:0007669"/>
    <property type="project" value="GOC"/>
</dbReference>
<dbReference type="GO" id="GO:0022904">
    <property type="term" value="P:respiratory electron transport chain"/>
    <property type="evidence" value="ECO:0007669"/>
    <property type="project" value="InterPro"/>
</dbReference>
<dbReference type="CDD" id="cd00290">
    <property type="entry name" value="cytochrome_b_C"/>
    <property type="match status" value="1"/>
</dbReference>
<dbReference type="CDD" id="cd00284">
    <property type="entry name" value="Cytochrome_b_N"/>
    <property type="match status" value="1"/>
</dbReference>
<dbReference type="FunFam" id="1.20.810.10:FF:000009">
    <property type="entry name" value="Cytochrome b"/>
    <property type="match status" value="1"/>
</dbReference>
<dbReference type="Gene3D" id="1.20.810.10">
    <property type="entry name" value="Cytochrome Bc1 Complex, Chain C"/>
    <property type="match status" value="1"/>
</dbReference>
<dbReference type="Gene3D" id="1.10.760.10">
    <property type="entry name" value="Cytochrome c-like domain"/>
    <property type="match status" value="1"/>
</dbReference>
<dbReference type="Gene3D" id="1.20.5.100">
    <property type="entry name" value="Cytochrome c1, transmembrane anchor, C-terminal"/>
    <property type="match status" value="1"/>
</dbReference>
<dbReference type="InterPro" id="IPR005798">
    <property type="entry name" value="Cyt_b/b6_C"/>
</dbReference>
<dbReference type="InterPro" id="IPR036150">
    <property type="entry name" value="Cyt_b/b6_C_sf"/>
</dbReference>
<dbReference type="InterPro" id="IPR005797">
    <property type="entry name" value="Cyt_b/b6_N"/>
</dbReference>
<dbReference type="InterPro" id="IPR009056">
    <property type="entry name" value="Cyt_c-like_dom"/>
</dbReference>
<dbReference type="InterPro" id="IPR036909">
    <property type="entry name" value="Cyt_c-like_dom_sf"/>
</dbReference>
<dbReference type="InterPro" id="IPR002326">
    <property type="entry name" value="Cyt_c1"/>
</dbReference>
<dbReference type="InterPro" id="IPR027387">
    <property type="entry name" value="Cytb/b6-like_sf"/>
</dbReference>
<dbReference type="InterPro" id="IPR048260">
    <property type="entry name" value="Cytochrome_b_C_euk/bac"/>
</dbReference>
<dbReference type="InterPro" id="IPR048259">
    <property type="entry name" value="Cytochrome_b_N_euk/bac"/>
</dbReference>
<dbReference type="InterPro" id="IPR016174">
    <property type="entry name" value="Di-haem_cyt_TM"/>
</dbReference>
<dbReference type="PANTHER" id="PTHR19271">
    <property type="entry name" value="CYTOCHROME B"/>
    <property type="match status" value="1"/>
</dbReference>
<dbReference type="PANTHER" id="PTHR19271:SF16">
    <property type="entry name" value="CYTOCHROME B"/>
    <property type="match status" value="1"/>
</dbReference>
<dbReference type="Pfam" id="PF00032">
    <property type="entry name" value="Cytochrom_B_C"/>
    <property type="match status" value="1"/>
</dbReference>
<dbReference type="Pfam" id="PF02167">
    <property type="entry name" value="Cytochrom_C1"/>
    <property type="match status" value="1"/>
</dbReference>
<dbReference type="Pfam" id="PF00033">
    <property type="entry name" value="Cytochrome_B"/>
    <property type="match status" value="1"/>
</dbReference>
<dbReference type="PRINTS" id="PR00603">
    <property type="entry name" value="CYTOCHROMEC1"/>
</dbReference>
<dbReference type="SUPFAM" id="SSF81648">
    <property type="entry name" value="a domain/subunit of cytochrome bc1 complex (Ubiquinol-cytochrome c reductase)"/>
    <property type="match status" value="1"/>
</dbReference>
<dbReference type="SUPFAM" id="SSF46626">
    <property type="entry name" value="Cytochrome c"/>
    <property type="match status" value="1"/>
</dbReference>
<dbReference type="SUPFAM" id="SSF81342">
    <property type="entry name" value="Transmembrane di-heme cytochromes"/>
    <property type="match status" value="1"/>
</dbReference>
<dbReference type="PROSITE" id="PS51003">
    <property type="entry name" value="CYTB_CTER"/>
    <property type="match status" value="1"/>
</dbReference>
<dbReference type="PROSITE" id="PS51002">
    <property type="entry name" value="CYTB_NTER"/>
    <property type="match status" value="1"/>
</dbReference>
<dbReference type="PROSITE" id="PS51007">
    <property type="entry name" value="CYTC"/>
    <property type="match status" value="1"/>
</dbReference>
<name>CYBC_BRADU</name>
<gene>
    <name type="primary">fbcH</name>
    <name type="ordered locus">blr2486</name>
</gene>
<sequence>MSGPSDYQPSNPALQWIERRLPILGLMHSSFVAYPTPRNLNYWWTFGAILSFMLGMQILTGVILAMHYTPHADLAFKSVELIVRDVNYGWLLRNMHACGASMFFFAVYVHMLRGLYYGSYKEPREVLWILGVIIYLLMMATGFMGYVLPWGQMSFWGATVITNLFSAIPYFGESIVTLLWGGYSVGNPTLNRFFSLHYLLPFLIAGVVVLHVWALHVAGQNNPEGVEPKSEKDTVPFTPHATIKDMFGVACFLLLYAWFIFYMPNYLGDADNYIPANPGVTPPHIVPEWYYLPFYAILRSIPNKLAGVIGMFSAIIILCFLPWLDAAKTRSSKYRPLAKQFFWIFVAVCILLGYLGAQPPEGIYVIAGRVLTVCYFAYFLIVLPLLSRIETPRPVPNSISEAILAKGGKAVASVAIALVAAGALFLGSLQDARANEGSDKPPGNKWSFAGPFGKFDRGALQRGLKVYKEVCASCHGLSYIAFRNLAEAGGPSYSVAQVAAFASDYKIKDGPNDAGDMFERPGRPADYFPSPFPNEQAARAANGGAAPPDLSLITKARSYGRGFPWFIFDFFTQYQEQGPDYVSAVLQGFEEKVPEGVTIPEGSYYNKYFPGHAIKMPKPLSDGQVTYDDGSPATVAQYSKDVTTFLMWTAEPHMEARKRLGFQVFVFLIIFAGLMYFTKKKVWADSH</sequence>